<organism>
    <name type="scientific">Buchnera aphidicola subsp. Cinara cedri (strain Cc)</name>
    <dbReference type="NCBI Taxonomy" id="372461"/>
    <lineage>
        <taxon>Bacteria</taxon>
        <taxon>Pseudomonadati</taxon>
        <taxon>Pseudomonadota</taxon>
        <taxon>Gammaproteobacteria</taxon>
        <taxon>Enterobacterales</taxon>
        <taxon>Erwiniaceae</taxon>
        <taxon>Buchnera</taxon>
    </lineage>
</organism>
<reference key="1">
    <citation type="journal article" date="2006" name="Science">
        <title>A small microbial genome: the end of a long symbiotic relationship?</title>
        <authorList>
            <person name="Perez-Brocal V."/>
            <person name="Gil R."/>
            <person name="Ramos S."/>
            <person name="Lamelas A."/>
            <person name="Postigo M."/>
            <person name="Michelena J.M."/>
            <person name="Silva F.J."/>
            <person name="Moya A."/>
            <person name="Latorre A."/>
        </authorList>
    </citation>
    <scope>NUCLEOTIDE SEQUENCE [LARGE SCALE GENOMIC DNA]</scope>
    <source>
        <strain>Cc</strain>
    </source>
</reference>
<evidence type="ECO:0000250" key="1"/>
<evidence type="ECO:0000305" key="2"/>
<gene>
    <name type="primary">rsmC</name>
    <name type="ordered locus">BCc_206</name>
</gene>
<protein>
    <recommendedName>
        <fullName>Ribosomal RNA small subunit methyltransferase C</fullName>
        <ecNumber>2.1.1.172</ecNumber>
    </recommendedName>
    <alternativeName>
        <fullName>16S rRNA m2G1207 methyltransferase</fullName>
    </alternativeName>
    <alternativeName>
        <fullName>rRNA (guanine-N(2)-)-methyltransferase RsmC</fullName>
    </alternativeName>
</protein>
<dbReference type="EC" id="2.1.1.172"/>
<dbReference type="EMBL" id="CP000263">
    <property type="protein sequence ID" value="ABJ90678.1"/>
    <property type="molecule type" value="Genomic_DNA"/>
</dbReference>
<dbReference type="RefSeq" id="WP_011672597.1">
    <property type="nucleotide sequence ID" value="NC_008513.1"/>
</dbReference>
<dbReference type="SMR" id="Q057M1"/>
<dbReference type="STRING" id="372461.BCc_206"/>
<dbReference type="KEGG" id="bcc:BCc_206"/>
<dbReference type="eggNOG" id="COG2813">
    <property type="taxonomic scope" value="Bacteria"/>
</dbReference>
<dbReference type="HOGENOM" id="CLU_049581_0_1_6"/>
<dbReference type="OrthoDB" id="9816072at2"/>
<dbReference type="Proteomes" id="UP000000669">
    <property type="component" value="Chromosome"/>
</dbReference>
<dbReference type="GO" id="GO:0005737">
    <property type="term" value="C:cytoplasm"/>
    <property type="evidence" value="ECO:0007669"/>
    <property type="project" value="UniProtKB-SubCell"/>
</dbReference>
<dbReference type="GO" id="GO:0052914">
    <property type="term" value="F:16S rRNA (guanine(1207)-N(2))-methyltransferase activity"/>
    <property type="evidence" value="ECO:0007669"/>
    <property type="project" value="UniProtKB-EC"/>
</dbReference>
<dbReference type="CDD" id="cd02440">
    <property type="entry name" value="AdoMet_MTases"/>
    <property type="match status" value="1"/>
</dbReference>
<dbReference type="Gene3D" id="3.40.50.150">
    <property type="entry name" value="Vaccinia Virus protein VP39"/>
    <property type="match status" value="2"/>
</dbReference>
<dbReference type="InterPro" id="IPR013675">
    <property type="entry name" value="Mtase_sm_N"/>
</dbReference>
<dbReference type="InterPro" id="IPR046977">
    <property type="entry name" value="RsmC/RlmG"/>
</dbReference>
<dbReference type="InterPro" id="IPR029063">
    <property type="entry name" value="SAM-dependent_MTases_sf"/>
</dbReference>
<dbReference type="InterPro" id="IPR007848">
    <property type="entry name" value="Small_mtfrase_dom"/>
</dbReference>
<dbReference type="PANTHER" id="PTHR47816">
    <property type="entry name" value="RIBOSOMAL RNA SMALL SUBUNIT METHYLTRANSFERASE C"/>
    <property type="match status" value="1"/>
</dbReference>
<dbReference type="PANTHER" id="PTHR47816:SF4">
    <property type="entry name" value="RIBOSOMAL RNA SMALL SUBUNIT METHYLTRANSFERASE C"/>
    <property type="match status" value="1"/>
</dbReference>
<dbReference type="Pfam" id="PF05175">
    <property type="entry name" value="MTS"/>
    <property type="match status" value="1"/>
</dbReference>
<dbReference type="Pfam" id="PF08468">
    <property type="entry name" value="MTS_N"/>
    <property type="match status" value="1"/>
</dbReference>
<dbReference type="SUPFAM" id="SSF53335">
    <property type="entry name" value="S-adenosyl-L-methionine-dependent methyltransferases"/>
    <property type="match status" value="1"/>
</dbReference>
<sequence length="343" mass="40049">MNKTVIKTFQISKEYKILKKNFQLFKNKTTIISGIIPSVFLKINIIKRFIFYVNYFNLYLKILKKNSKNVIFNNFNHKNKLSSYKQLIFFLTKNKKEFKLHLTFLLSHISKTCVIYVVGEKKCGINSISKIFSNYLIFKKIDYARTCSLYKAKIMKLPKFYLHKFINIYIWNNITIQSLPGVFGYKKIDTGSKLLISTFNKKINGKILDIGSGTGILSIALAKKNPLIKITLTDIYDAAIWCSKNNLIKNNLIGKVLFSDIYSHIKKRYDLIISNPPIHYNLKINLKILKKIIKNSKKHLKKKGELRIVISSFISLKYIINFNKINFKILLKNKSYTVIQITN</sequence>
<name>RSMC_BUCCC</name>
<accession>Q057M1</accession>
<comment type="function">
    <text evidence="1">Specifically methylates the guanine in position 1207 of 16S rRNA in the 30S particle.</text>
</comment>
<comment type="catalytic activity">
    <reaction>
        <text>guanosine(1207) in 16S rRNA + S-adenosyl-L-methionine = N(2)-methylguanosine(1207) in 16S rRNA + S-adenosyl-L-homocysteine + H(+)</text>
        <dbReference type="Rhea" id="RHEA:42736"/>
        <dbReference type="Rhea" id="RHEA-COMP:10213"/>
        <dbReference type="Rhea" id="RHEA-COMP:10214"/>
        <dbReference type="ChEBI" id="CHEBI:15378"/>
        <dbReference type="ChEBI" id="CHEBI:57856"/>
        <dbReference type="ChEBI" id="CHEBI:59789"/>
        <dbReference type="ChEBI" id="CHEBI:74269"/>
        <dbReference type="ChEBI" id="CHEBI:74481"/>
        <dbReference type="EC" id="2.1.1.172"/>
    </reaction>
</comment>
<comment type="subunit">
    <text evidence="1">Monomer.</text>
</comment>
<comment type="subcellular location">
    <subcellularLocation>
        <location evidence="2">Cytoplasm</location>
    </subcellularLocation>
</comment>
<comment type="similarity">
    <text evidence="2">Belongs to the methyltransferase superfamily. RsmC family.</text>
</comment>
<feature type="chain" id="PRO_0000369690" description="Ribosomal RNA small subunit methyltransferase C">
    <location>
        <begin position="1"/>
        <end position="343"/>
    </location>
</feature>
<keyword id="KW-0963">Cytoplasm</keyword>
<keyword id="KW-0489">Methyltransferase</keyword>
<keyword id="KW-1185">Reference proteome</keyword>
<keyword id="KW-0698">rRNA processing</keyword>
<keyword id="KW-0949">S-adenosyl-L-methionine</keyword>
<keyword id="KW-0808">Transferase</keyword>
<proteinExistence type="inferred from homology"/>